<reference key="1">
    <citation type="submission" date="2004-12" db="EMBL/GenBank/DDBJ databases">
        <authorList>
            <consortium name="NIH - Xenopus Gene Collection (XGC) project"/>
        </authorList>
    </citation>
    <scope>NUCLEOTIDE SEQUENCE [LARGE SCALE MRNA]</scope>
    <source>
        <tissue>Testis</tissue>
    </source>
</reference>
<accession>Q5PPV3</accession>
<feature type="chain" id="PRO_0000247462" description="MORN repeat-containing protein 3">
    <location>
        <begin position="1"/>
        <end position="238"/>
    </location>
</feature>
<feature type="repeat" description="MORN 1">
    <location>
        <begin position="38"/>
        <end position="60"/>
    </location>
</feature>
<feature type="repeat" description="MORN 2">
    <location>
        <begin position="62"/>
        <end position="84"/>
    </location>
</feature>
<feature type="repeat" description="MORN 3">
    <location>
        <begin position="91"/>
        <end position="113"/>
    </location>
</feature>
<feature type="repeat" description="MORN 4">
    <location>
        <begin position="114"/>
        <end position="136"/>
    </location>
</feature>
<feature type="repeat" description="MORN 5">
    <location>
        <begin position="137"/>
        <end position="159"/>
    </location>
</feature>
<feature type="repeat" description="MORN 6">
    <location>
        <begin position="160"/>
        <end position="182"/>
    </location>
</feature>
<feature type="repeat" description="MORN 7">
    <location>
        <begin position="184"/>
        <end position="205"/>
    </location>
</feature>
<proteinExistence type="evidence at transcript level"/>
<gene>
    <name type="primary">morn3</name>
</gene>
<comment type="function">
    <text evidence="1 2">Assembles a suppression complex (suppresome) by tethering SIRT1 and MDM2 to regulate composite modifications of p53/TP53. Confers both deacetylation-mediated functional inactivation, by SIRT1, and ubiquitination-dependent degradation, by MDM2, of p53/TP53, promoting a proliferative and cell survival behaviors (By similarity). May play a role in the regulation of spermatogenesis (By similarity).</text>
</comment>
<comment type="subcellular location">
    <subcellularLocation>
        <location evidence="2">Cytoplasmic vesicle</location>
        <location evidence="2">Secretory vesicle</location>
        <location evidence="2">Acrosome</location>
    </subcellularLocation>
    <text evidence="2">Localized in the acrosome in germ cells throughout spermiogenesis, it is also present in the manchette of elongating spermatids.</text>
</comment>
<name>MORN3_XENLA</name>
<protein>
    <recommendedName>
        <fullName>MORN repeat-containing protein 3</fullName>
    </recommendedName>
</protein>
<sequence>MPLVKAPKKAEPIWKEWDAKAQKAGLRHSVYSVNGDEYTGEWLNNLRHGKGTYMWKRRKSIYEGDWKCGERSGFGTYSVQDSNTGEYIKVYSGYWDNDKKHGYGTHFYSAKEYYEGEWKCGKRCGWGRMYFANGDIYEGEWLEDKHSGQGMLCLANENRYEGSWKDGKKHGPGKFYYLNKGQLYEGVWVEDIPKCGTMVDFGRTEAPYPTKYPLPEVKVADPEGVLKEAQQPLFGEHE</sequence>
<evidence type="ECO:0000250" key="1">
    <source>
        <dbReference type="UniProtKB" id="Q6PF18"/>
    </source>
</evidence>
<evidence type="ECO:0000250" key="2">
    <source>
        <dbReference type="UniProtKB" id="Q8C5T4"/>
    </source>
</evidence>
<dbReference type="EMBL" id="BC087483">
    <property type="protein sequence ID" value="AAH87483.1"/>
    <property type="molecule type" value="mRNA"/>
</dbReference>
<dbReference type="RefSeq" id="NP_001088801.1">
    <property type="nucleotide sequence ID" value="NM_001095332.1"/>
</dbReference>
<dbReference type="RefSeq" id="XP_018094427.1">
    <property type="nucleotide sequence ID" value="XM_018238938.1"/>
</dbReference>
<dbReference type="SMR" id="Q5PPV3"/>
<dbReference type="DNASU" id="496069"/>
<dbReference type="GeneID" id="496069"/>
<dbReference type="KEGG" id="xla:496069"/>
<dbReference type="AGR" id="Xenbase:XB-GENE-961556"/>
<dbReference type="CTD" id="496069"/>
<dbReference type="Xenbase" id="XB-GENE-961556">
    <property type="gene designation" value="morn3.S"/>
</dbReference>
<dbReference type="OMA" id="CGIMIDF"/>
<dbReference type="OrthoDB" id="270720at2759"/>
<dbReference type="Proteomes" id="UP000186698">
    <property type="component" value="Chromosome 1S"/>
</dbReference>
<dbReference type="Bgee" id="496069">
    <property type="expression patterns" value="Expressed in testis and 10 other cell types or tissues"/>
</dbReference>
<dbReference type="GO" id="GO:0001669">
    <property type="term" value="C:acrosomal vesicle"/>
    <property type="evidence" value="ECO:0007669"/>
    <property type="project" value="UniProtKB-SubCell"/>
</dbReference>
<dbReference type="Gene3D" id="2.20.110.10">
    <property type="entry name" value="Histone H3 K4-specific methyltransferase SET7/9 N-terminal domain"/>
    <property type="match status" value="3"/>
</dbReference>
<dbReference type="InterPro" id="IPR003409">
    <property type="entry name" value="MORN"/>
</dbReference>
<dbReference type="InterPro" id="IPR052472">
    <property type="entry name" value="MORN3"/>
</dbReference>
<dbReference type="PANTHER" id="PTHR46511">
    <property type="entry name" value="MORN REPEAT-CONTAINING PROTEIN 3"/>
    <property type="match status" value="1"/>
</dbReference>
<dbReference type="PANTHER" id="PTHR46511:SF1">
    <property type="entry name" value="MORN REPEAT-CONTAINING PROTEIN 3"/>
    <property type="match status" value="1"/>
</dbReference>
<dbReference type="Pfam" id="PF02493">
    <property type="entry name" value="MORN"/>
    <property type="match status" value="6"/>
</dbReference>
<dbReference type="SMART" id="SM00698">
    <property type="entry name" value="MORN"/>
    <property type="match status" value="6"/>
</dbReference>
<dbReference type="SUPFAM" id="SSF82185">
    <property type="entry name" value="Histone H3 K4-specific methyltransferase SET7/9 N-terminal domain"/>
    <property type="match status" value="2"/>
</dbReference>
<organism>
    <name type="scientific">Xenopus laevis</name>
    <name type="common">African clawed frog</name>
    <dbReference type="NCBI Taxonomy" id="8355"/>
    <lineage>
        <taxon>Eukaryota</taxon>
        <taxon>Metazoa</taxon>
        <taxon>Chordata</taxon>
        <taxon>Craniata</taxon>
        <taxon>Vertebrata</taxon>
        <taxon>Euteleostomi</taxon>
        <taxon>Amphibia</taxon>
        <taxon>Batrachia</taxon>
        <taxon>Anura</taxon>
        <taxon>Pipoidea</taxon>
        <taxon>Pipidae</taxon>
        <taxon>Xenopodinae</taxon>
        <taxon>Xenopus</taxon>
        <taxon>Xenopus</taxon>
    </lineage>
</organism>
<keyword id="KW-0968">Cytoplasmic vesicle</keyword>
<keyword id="KW-1185">Reference proteome</keyword>
<keyword id="KW-0677">Repeat</keyword>